<keyword id="KW-0143">Chaperone</keyword>
<keyword id="KW-0963">Cytoplasm</keyword>
<keyword id="KW-1015">Disulfide bond</keyword>
<keyword id="KW-0676">Redox-active center</keyword>
<keyword id="KW-0346">Stress response</keyword>
<keyword id="KW-0862">Zinc</keyword>
<accession>A2RN83</accession>
<gene>
    <name evidence="1" type="primary">hslO</name>
    <name type="ordered locus">llmg_2204</name>
</gene>
<feature type="chain" id="PRO_1000015549" description="33 kDa chaperonin">
    <location>
        <begin position="1"/>
        <end position="288"/>
    </location>
</feature>
<feature type="disulfide bond" description="Redox-active" evidence="1">
    <location>
        <begin position="236"/>
        <end position="238"/>
    </location>
</feature>
<feature type="disulfide bond" description="Redox-active" evidence="1">
    <location>
        <begin position="269"/>
        <end position="272"/>
    </location>
</feature>
<name>HSLO_LACLM</name>
<protein>
    <recommendedName>
        <fullName evidence="1">33 kDa chaperonin</fullName>
    </recommendedName>
    <alternativeName>
        <fullName evidence="1">Heat shock protein 33 homolog</fullName>
        <shortName evidence="1">HSP33</shortName>
    </alternativeName>
</protein>
<sequence length="288" mass="31730">MDKIIKSISKNGHFRAFALDSTLTVREAQERHQTWPTSTVALGRTLIAAQILGANEKGDTKITVKVLGDGAMGPIIAVADSKGHVKGYVKNRELDYKKASTGEVLVAPFVGNGFLVVVKDMGLKQPYSGQVDLITGEIGEDLAWYFLSSEQTPSSVGVNVLLNEDSDTVKIAGGFMLQALPDATDEEITEIEHNIKSMPSIATMLTRDEPLKTMLDNIYGDMEYKNLGEFPLAFKCDCSKERFLEGIKSLGRQPIEEMIAEDHGAEIICQFCENKYEYSEEELKALIN</sequence>
<evidence type="ECO:0000255" key="1">
    <source>
        <dbReference type="HAMAP-Rule" id="MF_00117"/>
    </source>
</evidence>
<comment type="function">
    <text evidence="1">Redox regulated molecular chaperone. Protects both thermally unfolding and oxidatively damaged proteins from irreversible aggregation. Plays an important role in the bacterial defense system toward oxidative stress.</text>
</comment>
<comment type="subcellular location">
    <subcellularLocation>
        <location evidence="1">Cytoplasm</location>
    </subcellularLocation>
</comment>
<comment type="PTM">
    <text evidence="1">Under oxidizing conditions two disulfide bonds are formed involving the reactive cysteines. Under reducing conditions zinc is bound to the reactive cysteines and the protein is inactive.</text>
</comment>
<comment type="similarity">
    <text evidence="1">Belongs to the HSP33 family.</text>
</comment>
<proteinExistence type="inferred from homology"/>
<dbReference type="EMBL" id="AM406671">
    <property type="protein sequence ID" value="CAL98771.1"/>
    <property type="molecule type" value="Genomic_DNA"/>
</dbReference>
<dbReference type="RefSeq" id="WP_011835897.1">
    <property type="nucleotide sequence ID" value="NC_009004.1"/>
</dbReference>
<dbReference type="SMR" id="A2RN83"/>
<dbReference type="STRING" id="416870.llmg_2204"/>
<dbReference type="KEGG" id="llm:llmg_2204"/>
<dbReference type="eggNOG" id="COG1281">
    <property type="taxonomic scope" value="Bacteria"/>
</dbReference>
<dbReference type="HOGENOM" id="CLU_054493_1_0_9"/>
<dbReference type="OrthoDB" id="9776534at2"/>
<dbReference type="PhylomeDB" id="A2RN83"/>
<dbReference type="Proteomes" id="UP000000364">
    <property type="component" value="Chromosome"/>
</dbReference>
<dbReference type="GO" id="GO:0005737">
    <property type="term" value="C:cytoplasm"/>
    <property type="evidence" value="ECO:0007669"/>
    <property type="project" value="UniProtKB-SubCell"/>
</dbReference>
<dbReference type="GO" id="GO:0044183">
    <property type="term" value="F:protein folding chaperone"/>
    <property type="evidence" value="ECO:0007669"/>
    <property type="project" value="TreeGrafter"/>
</dbReference>
<dbReference type="GO" id="GO:0051082">
    <property type="term" value="F:unfolded protein binding"/>
    <property type="evidence" value="ECO:0007669"/>
    <property type="project" value="UniProtKB-UniRule"/>
</dbReference>
<dbReference type="GO" id="GO:0042026">
    <property type="term" value="P:protein refolding"/>
    <property type="evidence" value="ECO:0007669"/>
    <property type="project" value="TreeGrafter"/>
</dbReference>
<dbReference type="CDD" id="cd00498">
    <property type="entry name" value="Hsp33"/>
    <property type="match status" value="1"/>
</dbReference>
<dbReference type="Gene3D" id="3.55.30.10">
    <property type="entry name" value="Hsp33 domain"/>
    <property type="match status" value="1"/>
</dbReference>
<dbReference type="Gene3D" id="3.90.1280.10">
    <property type="entry name" value="HSP33 redox switch-like"/>
    <property type="match status" value="1"/>
</dbReference>
<dbReference type="HAMAP" id="MF_00117">
    <property type="entry name" value="HslO"/>
    <property type="match status" value="1"/>
</dbReference>
<dbReference type="InterPro" id="IPR000397">
    <property type="entry name" value="Heat_shock_Hsp33"/>
</dbReference>
<dbReference type="InterPro" id="IPR016154">
    <property type="entry name" value="Heat_shock_Hsp33_C"/>
</dbReference>
<dbReference type="InterPro" id="IPR016153">
    <property type="entry name" value="Heat_shock_Hsp33_N"/>
</dbReference>
<dbReference type="NCBIfam" id="NF001033">
    <property type="entry name" value="PRK00114.1"/>
    <property type="match status" value="1"/>
</dbReference>
<dbReference type="PANTHER" id="PTHR30111">
    <property type="entry name" value="33 KDA CHAPERONIN"/>
    <property type="match status" value="1"/>
</dbReference>
<dbReference type="PANTHER" id="PTHR30111:SF1">
    <property type="entry name" value="33 KDA CHAPERONIN"/>
    <property type="match status" value="1"/>
</dbReference>
<dbReference type="Pfam" id="PF01430">
    <property type="entry name" value="HSP33"/>
    <property type="match status" value="1"/>
</dbReference>
<dbReference type="PIRSF" id="PIRSF005261">
    <property type="entry name" value="Heat_shock_Hsp33"/>
    <property type="match status" value="1"/>
</dbReference>
<dbReference type="SUPFAM" id="SSF64397">
    <property type="entry name" value="Hsp33 domain"/>
    <property type="match status" value="1"/>
</dbReference>
<dbReference type="SUPFAM" id="SSF118352">
    <property type="entry name" value="HSP33 redox switch-like"/>
    <property type="match status" value="1"/>
</dbReference>
<reference key="1">
    <citation type="journal article" date="2007" name="J. Bacteriol.">
        <title>The complete genome sequence of the lactic acid bacterial paradigm Lactococcus lactis subsp. cremoris MG1363.</title>
        <authorList>
            <person name="Wegmann U."/>
            <person name="O'Connell-Motherway M."/>
            <person name="Zomer A."/>
            <person name="Buist G."/>
            <person name="Shearman C."/>
            <person name="Canchaya C."/>
            <person name="Ventura M."/>
            <person name="Goesmann A."/>
            <person name="Gasson M.J."/>
            <person name="Kuipers O.P."/>
            <person name="van Sinderen D."/>
            <person name="Kok J."/>
        </authorList>
    </citation>
    <scope>NUCLEOTIDE SEQUENCE [LARGE SCALE GENOMIC DNA]</scope>
    <source>
        <strain>MG1363</strain>
    </source>
</reference>
<organism>
    <name type="scientific">Lactococcus lactis subsp. cremoris (strain MG1363)</name>
    <dbReference type="NCBI Taxonomy" id="416870"/>
    <lineage>
        <taxon>Bacteria</taxon>
        <taxon>Bacillati</taxon>
        <taxon>Bacillota</taxon>
        <taxon>Bacilli</taxon>
        <taxon>Lactobacillales</taxon>
        <taxon>Streptococcaceae</taxon>
        <taxon>Lactococcus</taxon>
        <taxon>Lactococcus cremoris subsp. cremoris</taxon>
    </lineage>
</organism>